<proteinExistence type="evidence at protein level"/>
<dbReference type="EC" id="5.3.3.12" evidence="3"/>
<dbReference type="EMBL" id="AE014297">
    <property type="protein sequence ID" value="AAF54884.1"/>
    <property type="molecule type" value="Genomic_DNA"/>
</dbReference>
<dbReference type="EMBL" id="BT003613">
    <property type="protein sequence ID" value="AAO39616.1"/>
    <property type="status" value="ALT_INIT"/>
    <property type="molecule type" value="mRNA"/>
</dbReference>
<dbReference type="RefSeq" id="NP_524335.1">
    <molecule id="Q9VG09-1"/>
    <property type="nucleotide sequence ID" value="NM_079611.2"/>
</dbReference>
<dbReference type="SMR" id="Q9VG09"/>
<dbReference type="FunCoup" id="Q9VG09">
    <property type="interactions" value="28"/>
</dbReference>
<dbReference type="IntAct" id="Q9VG09">
    <property type="interactions" value="4"/>
</dbReference>
<dbReference type="STRING" id="7227.FBpp0082191"/>
<dbReference type="GlyCosmos" id="Q9VG09">
    <property type="glycosylation" value="2 sites, No reported glycans"/>
</dbReference>
<dbReference type="GlyGen" id="Q9VG09">
    <property type="glycosylation" value="2 sites"/>
</dbReference>
<dbReference type="PaxDb" id="7227-FBpp0082191"/>
<dbReference type="DNASU" id="41595"/>
<dbReference type="EnsemblMetazoa" id="FBtr0082723">
    <molecule id="Q9VG09-1"/>
    <property type="protein sequence ID" value="FBpp0082191"/>
    <property type="gene ID" value="FBgn0041710"/>
</dbReference>
<dbReference type="GeneID" id="41595"/>
<dbReference type="KEGG" id="dme:Dmel_CG18550"/>
<dbReference type="UCSC" id="CG18550-RA">
    <molecule id="Q9VG09-1"/>
    <property type="organism name" value="d. melanogaster"/>
</dbReference>
<dbReference type="AGR" id="FB:FBgn0041710"/>
<dbReference type="CTD" id="41595"/>
<dbReference type="FlyBase" id="FBgn0041710">
    <property type="gene designation" value="yellow-f"/>
</dbReference>
<dbReference type="VEuPathDB" id="VectorBase:FBgn0041710"/>
<dbReference type="eggNOG" id="ENOG502SKJJ">
    <property type="taxonomic scope" value="Eukaryota"/>
</dbReference>
<dbReference type="GeneTree" id="ENSGT00530000064224"/>
<dbReference type="InParanoid" id="Q9VG09"/>
<dbReference type="OMA" id="CAIAGFQ"/>
<dbReference type="OrthoDB" id="7776143at2759"/>
<dbReference type="PhylomeDB" id="Q9VG09"/>
<dbReference type="UniPathway" id="UPA00785"/>
<dbReference type="BioGRID-ORCS" id="41595">
    <property type="hits" value="0 hits in 1 CRISPR screen"/>
</dbReference>
<dbReference type="GenomeRNAi" id="41595"/>
<dbReference type="PRO" id="PR:Q9VG09"/>
<dbReference type="Proteomes" id="UP000000803">
    <property type="component" value="Chromosome 3R"/>
</dbReference>
<dbReference type="Bgee" id="FBgn0041710">
    <property type="expression patterns" value="Expressed in embryonic/larval hemocyte (Drosophila) and 26 other cell types or tissues"/>
</dbReference>
<dbReference type="ExpressionAtlas" id="Q9VG09">
    <property type="expression patterns" value="baseline and differential"/>
</dbReference>
<dbReference type="GO" id="GO:0005576">
    <property type="term" value="C:extracellular region"/>
    <property type="evidence" value="ECO:0000314"/>
    <property type="project" value="FlyBase"/>
</dbReference>
<dbReference type="GO" id="GO:0004167">
    <property type="term" value="F:dopachrome isomerase activity"/>
    <property type="evidence" value="ECO:0000314"/>
    <property type="project" value="FlyBase"/>
</dbReference>
<dbReference type="GO" id="GO:0106417">
    <property type="term" value="F:dopaminechrome tautomerase activity"/>
    <property type="evidence" value="ECO:0000314"/>
    <property type="project" value="FlyBase"/>
</dbReference>
<dbReference type="GO" id="GO:0048066">
    <property type="term" value="P:developmental pigmentation"/>
    <property type="evidence" value="ECO:0000304"/>
    <property type="project" value="FlyBase"/>
</dbReference>
<dbReference type="GO" id="GO:0042435">
    <property type="term" value="P:indole-containing compound biosynthetic process"/>
    <property type="evidence" value="ECO:0000314"/>
    <property type="project" value="FlyBase"/>
</dbReference>
<dbReference type="GO" id="GO:0006583">
    <property type="term" value="P:melanin biosynthetic process from tyrosine"/>
    <property type="evidence" value="ECO:0000314"/>
    <property type="project" value="FlyBase"/>
</dbReference>
<dbReference type="FunFam" id="2.120.10.30:FF:000092">
    <property type="entry name" value="GD20529"/>
    <property type="match status" value="1"/>
</dbReference>
<dbReference type="Gene3D" id="2.120.10.30">
    <property type="entry name" value="TolB, C-terminal domain"/>
    <property type="match status" value="1"/>
</dbReference>
<dbReference type="InterPro" id="IPR011042">
    <property type="entry name" value="6-blade_b-propeller_TolB-like"/>
</dbReference>
<dbReference type="InterPro" id="IPR017996">
    <property type="entry name" value="Royal_jelly/protein_yellow"/>
</dbReference>
<dbReference type="PANTHER" id="PTHR10009:SF10">
    <property type="entry name" value="L-DOPACHROME TAUTOMERASE YELLOW-F-RELATED"/>
    <property type="match status" value="1"/>
</dbReference>
<dbReference type="PANTHER" id="PTHR10009">
    <property type="entry name" value="PROTEIN YELLOW-RELATED"/>
    <property type="match status" value="1"/>
</dbReference>
<dbReference type="Pfam" id="PF03022">
    <property type="entry name" value="MRJP"/>
    <property type="match status" value="1"/>
</dbReference>
<dbReference type="SUPFAM" id="SSF63829">
    <property type="entry name" value="Calcium-dependent phosphotriesterase"/>
    <property type="match status" value="1"/>
</dbReference>
<organism evidence="7">
    <name type="scientific">Drosophila melanogaster</name>
    <name type="common">Fruit fly</name>
    <dbReference type="NCBI Taxonomy" id="7227"/>
    <lineage>
        <taxon>Eukaryota</taxon>
        <taxon>Metazoa</taxon>
        <taxon>Ecdysozoa</taxon>
        <taxon>Arthropoda</taxon>
        <taxon>Hexapoda</taxon>
        <taxon>Insecta</taxon>
        <taxon>Pterygota</taxon>
        <taxon>Neoptera</taxon>
        <taxon>Endopterygota</taxon>
        <taxon>Diptera</taxon>
        <taxon>Brachycera</taxon>
        <taxon>Muscomorpha</taxon>
        <taxon>Ephydroidea</taxon>
        <taxon>Drosophilidae</taxon>
        <taxon>Drosophila</taxon>
        <taxon>Sophophora</taxon>
    </lineage>
</organism>
<feature type="signal peptide" evidence="1">
    <location>
        <begin position="1"/>
        <end position="23"/>
    </location>
</feature>
<feature type="chain" id="PRO_5004334647" description="L-dopachrome tautomerase yellow-f">
    <location>
        <begin position="24"/>
        <end position="429"/>
    </location>
</feature>
<feature type="glycosylation site" description="N-linked (GlcNAc...) asparagine" evidence="2">
    <location>
        <position position="133"/>
    </location>
</feature>
<feature type="glycosylation site" description="N-linked (GlcNAc...) asparagine" evidence="2">
    <location>
        <position position="372"/>
    </location>
</feature>
<feature type="splice variant" id="VSP_058327" description="In isoform 2.">
    <original>M</original>
    <variation>SVTSGFSARKGERPEFYKM</variation>
    <location>
        <position position="1"/>
    </location>
</feature>
<comment type="function">
    <text evidence="3">Tautomerization of L-dopachrome with decarboxylation to give 5,6-dihydroxyindole (DHI). Also catalyzes the tautomerization of the methyl ester of L-dopachrome and dopamine chrome. May play a role in melanization reactions during late pupal and adult stages. May play a role in melanization reactions during larval and early pupal stages.</text>
</comment>
<comment type="catalytic activity">
    <reaction evidence="3">
        <text>L-dopachrome = 5,6-dihydroxyindole-2-carboxylate</text>
        <dbReference type="Rhea" id="RHEA:13041"/>
        <dbReference type="ChEBI" id="CHEBI:16875"/>
        <dbReference type="ChEBI" id="CHEBI:57509"/>
        <dbReference type="EC" id="5.3.3.12"/>
    </reaction>
</comment>
<comment type="biophysicochemical properties">
    <kinetics>
        <KM evidence="3">0.33 mM for L-dopachrome</KM>
        <KM evidence="3">0.29 mM for dopamine chrome</KM>
        <Vmax evidence="3">137.0 umol/min/mg enzyme with L-dopachrome as substrate</Vmax>
        <Vmax evidence="3">32.0 umol/min/mg enzyme with dopamine chrome as substrate</Vmax>
    </kinetics>
</comment>
<comment type="pathway">
    <text evidence="3">Pigment biosynthesis; melanin biosynthesis.</text>
</comment>
<comment type="subcellular location">
    <subcellularLocation>
        <location evidence="3">Secreted</location>
    </subcellularLocation>
</comment>
<comment type="alternative products">
    <event type="alternative initiation"/>
    <isoform>
        <id>Q9VG09-1</id>
        <name>1</name>
        <sequence type="displayed"/>
    </isoform>
    <isoform>
        <id>Q9VG09-2</id>
        <name>2</name>
        <sequence type="described" ref="VSP_058327"/>
    </isoform>
</comment>
<comment type="developmental stage">
    <text evidence="3">Expressed in larvae and pupae, with highest levels in later larval and early pupal stages. Very low expression in 1-day-old adults.</text>
</comment>
<comment type="miscellaneous">
    <molecule>Isoform 2</molecule>
    <text evidence="4">Incomplete sequence.</text>
</comment>
<comment type="similarity">
    <text evidence="4">Belongs to the major royal jelly protein family.</text>
</comment>
<comment type="sequence caution" evidence="4">
    <conflict type="erroneous initiation">
        <sequence resource="EMBL-CDS" id="AAO39616"/>
    </conflict>
    <text>Truncated N-terminus.</text>
</comment>
<accession>Q9VG09</accession>
<accession>Q86NV9</accession>
<reference evidence="7" key="1">
    <citation type="journal article" date="2000" name="Science">
        <title>The genome sequence of Drosophila melanogaster.</title>
        <authorList>
            <person name="Adams M.D."/>
            <person name="Celniker S.E."/>
            <person name="Holt R.A."/>
            <person name="Evans C.A."/>
            <person name="Gocayne J.D."/>
            <person name="Amanatides P.G."/>
            <person name="Scherer S.E."/>
            <person name="Li P.W."/>
            <person name="Hoskins R.A."/>
            <person name="Galle R.F."/>
            <person name="George R.A."/>
            <person name="Lewis S.E."/>
            <person name="Richards S."/>
            <person name="Ashburner M."/>
            <person name="Henderson S.N."/>
            <person name="Sutton G.G."/>
            <person name="Wortman J.R."/>
            <person name="Yandell M.D."/>
            <person name="Zhang Q."/>
            <person name="Chen L.X."/>
            <person name="Brandon R.C."/>
            <person name="Rogers Y.-H.C."/>
            <person name="Blazej R.G."/>
            <person name="Champe M."/>
            <person name="Pfeiffer B.D."/>
            <person name="Wan K.H."/>
            <person name="Doyle C."/>
            <person name="Baxter E.G."/>
            <person name="Helt G."/>
            <person name="Nelson C.R."/>
            <person name="Miklos G.L.G."/>
            <person name="Abril J.F."/>
            <person name="Agbayani A."/>
            <person name="An H.-J."/>
            <person name="Andrews-Pfannkoch C."/>
            <person name="Baldwin D."/>
            <person name="Ballew R.M."/>
            <person name="Basu A."/>
            <person name="Baxendale J."/>
            <person name="Bayraktaroglu L."/>
            <person name="Beasley E.M."/>
            <person name="Beeson K.Y."/>
            <person name="Benos P.V."/>
            <person name="Berman B.P."/>
            <person name="Bhandari D."/>
            <person name="Bolshakov S."/>
            <person name="Borkova D."/>
            <person name="Botchan M.R."/>
            <person name="Bouck J."/>
            <person name="Brokstein P."/>
            <person name="Brottier P."/>
            <person name="Burtis K.C."/>
            <person name="Busam D.A."/>
            <person name="Butler H."/>
            <person name="Cadieu E."/>
            <person name="Center A."/>
            <person name="Chandra I."/>
            <person name="Cherry J.M."/>
            <person name="Cawley S."/>
            <person name="Dahlke C."/>
            <person name="Davenport L.B."/>
            <person name="Davies P."/>
            <person name="de Pablos B."/>
            <person name="Delcher A."/>
            <person name="Deng Z."/>
            <person name="Mays A.D."/>
            <person name="Dew I."/>
            <person name="Dietz S.M."/>
            <person name="Dodson K."/>
            <person name="Doup L.E."/>
            <person name="Downes M."/>
            <person name="Dugan-Rocha S."/>
            <person name="Dunkov B.C."/>
            <person name="Dunn P."/>
            <person name="Durbin K.J."/>
            <person name="Evangelista C.C."/>
            <person name="Ferraz C."/>
            <person name="Ferriera S."/>
            <person name="Fleischmann W."/>
            <person name="Fosler C."/>
            <person name="Gabrielian A.E."/>
            <person name="Garg N.S."/>
            <person name="Gelbart W.M."/>
            <person name="Glasser K."/>
            <person name="Glodek A."/>
            <person name="Gong F."/>
            <person name="Gorrell J.H."/>
            <person name="Gu Z."/>
            <person name="Guan P."/>
            <person name="Harris M."/>
            <person name="Harris N.L."/>
            <person name="Harvey D.A."/>
            <person name="Heiman T.J."/>
            <person name="Hernandez J.R."/>
            <person name="Houck J."/>
            <person name="Hostin D."/>
            <person name="Houston K.A."/>
            <person name="Howland T.J."/>
            <person name="Wei M.-H."/>
            <person name="Ibegwam C."/>
            <person name="Jalali M."/>
            <person name="Kalush F."/>
            <person name="Karpen G.H."/>
            <person name="Ke Z."/>
            <person name="Kennison J.A."/>
            <person name="Ketchum K.A."/>
            <person name="Kimmel B.E."/>
            <person name="Kodira C.D."/>
            <person name="Kraft C.L."/>
            <person name="Kravitz S."/>
            <person name="Kulp D."/>
            <person name="Lai Z."/>
            <person name="Lasko P."/>
            <person name="Lei Y."/>
            <person name="Levitsky A.A."/>
            <person name="Li J.H."/>
            <person name="Li Z."/>
            <person name="Liang Y."/>
            <person name="Lin X."/>
            <person name="Liu X."/>
            <person name="Mattei B."/>
            <person name="McIntosh T.C."/>
            <person name="McLeod M.P."/>
            <person name="McPherson D."/>
            <person name="Merkulov G."/>
            <person name="Milshina N.V."/>
            <person name="Mobarry C."/>
            <person name="Morris J."/>
            <person name="Moshrefi A."/>
            <person name="Mount S.M."/>
            <person name="Moy M."/>
            <person name="Murphy B."/>
            <person name="Murphy L."/>
            <person name="Muzny D.M."/>
            <person name="Nelson D.L."/>
            <person name="Nelson D.R."/>
            <person name="Nelson K.A."/>
            <person name="Nixon K."/>
            <person name="Nusskern D.R."/>
            <person name="Pacleb J.M."/>
            <person name="Palazzolo M."/>
            <person name="Pittman G.S."/>
            <person name="Pan S."/>
            <person name="Pollard J."/>
            <person name="Puri V."/>
            <person name="Reese M.G."/>
            <person name="Reinert K."/>
            <person name="Remington K."/>
            <person name="Saunders R.D.C."/>
            <person name="Scheeler F."/>
            <person name="Shen H."/>
            <person name="Shue B.C."/>
            <person name="Siden-Kiamos I."/>
            <person name="Simpson M."/>
            <person name="Skupski M.P."/>
            <person name="Smith T.J."/>
            <person name="Spier E."/>
            <person name="Spradling A.C."/>
            <person name="Stapleton M."/>
            <person name="Strong R."/>
            <person name="Sun E."/>
            <person name="Svirskas R."/>
            <person name="Tector C."/>
            <person name="Turner R."/>
            <person name="Venter E."/>
            <person name="Wang A.H."/>
            <person name="Wang X."/>
            <person name="Wang Z.-Y."/>
            <person name="Wassarman D.A."/>
            <person name="Weinstock G.M."/>
            <person name="Weissenbach J."/>
            <person name="Williams S.M."/>
            <person name="Woodage T."/>
            <person name="Worley K.C."/>
            <person name="Wu D."/>
            <person name="Yang S."/>
            <person name="Yao Q.A."/>
            <person name="Ye J."/>
            <person name="Yeh R.-F."/>
            <person name="Zaveri J.S."/>
            <person name="Zhan M."/>
            <person name="Zhang G."/>
            <person name="Zhao Q."/>
            <person name="Zheng L."/>
            <person name="Zheng X.H."/>
            <person name="Zhong F.N."/>
            <person name="Zhong W."/>
            <person name="Zhou X."/>
            <person name="Zhu S.C."/>
            <person name="Zhu X."/>
            <person name="Smith H.O."/>
            <person name="Gibbs R.A."/>
            <person name="Myers E.W."/>
            <person name="Rubin G.M."/>
            <person name="Venter J.C."/>
        </authorList>
    </citation>
    <scope>NUCLEOTIDE SEQUENCE [LARGE SCALE GENOMIC DNA]</scope>
    <source>
        <strain evidence="7">Berkeley</strain>
    </source>
</reference>
<reference evidence="7" key="2">
    <citation type="journal article" date="2002" name="Genome Biol.">
        <title>Annotation of the Drosophila melanogaster euchromatic genome: a systematic review.</title>
        <authorList>
            <person name="Misra S."/>
            <person name="Crosby M.A."/>
            <person name="Mungall C.J."/>
            <person name="Matthews B.B."/>
            <person name="Campbell K.S."/>
            <person name="Hradecky P."/>
            <person name="Huang Y."/>
            <person name="Kaminker J.S."/>
            <person name="Millburn G.H."/>
            <person name="Prochnik S.E."/>
            <person name="Smith C.D."/>
            <person name="Tupy J.L."/>
            <person name="Whitfield E.J."/>
            <person name="Bayraktaroglu L."/>
            <person name="Berman B.P."/>
            <person name="Bettencourt B.R."/>
            <person name="Celniker S.E."/>
            <person name="de Grey A.D.N.J."/>
            <person name="Drysdale R.A."/>
            <person name="Harris N.L."/>
            <person name="Richter J."/>
            <person name="Russo S."/>
            <person name="Schroeder A.J."/>
            <person name="Shu S.Q."/>
            <person name="Stapleton M."/>
            <person name="Yamada C."/>
            <person name="Ashburner M."/>
            <person name="Gelbart W.M."/>
            <person name="Rubin G.M."/>
            <person name="Lewis S.E."/>
        </authorList>
    </citation>
    <scope>GENOME REANNOTATION</scope>
    <source>
        <strain evidence="7">Berkeley</strain>
    </source>
</reference>
<reference evidence="5" key="3">
    <citation type="submission" date="2003-02" db="EMBL/GenBank/DDBJ databases">
        <authorList>
            <person name="Stapleton M."/>
            <person name="Brokstein P."/>
            <person name="Hong L."/>
            <person name="Agbayani A."/>
            <person name="Carlson J."/>
            <person name="Champe M."/>
            <person name="Chavez C."/>
            <person name="Dorsett V."/>
            <person name="Dresnek D."/>
            <person name="Farfan D."/>
            <person name="Frise E."/>
            <person name="George R."/>
            <person name="Gonzalez M."/>
            <person name="Guarin H."/>
            <person name="Kronmiller B."/>
            <person name="Li P."/>
            <person name="Liao G."/>
            <person name="Miranda A."/>
            <person name="Mungall C.J."/>
            <person name="Nunoo J."/>
            <person name="Pacleb J."/>
            <person name="Paragas V."/>
            <person name="Park S."/>
            <person name="Patel S."/>
            <person name="Phouanenavong S."/>
            <person name="Wan K."/>
            <person name="Yu C."/>
            <person name="Lewis S.E."/>
            <person name="Rubin G.M."/>
            <person name="Celniker S."/>
        </authorList>
    </citation>
    <scope>NUCLEOTIDE SEQUENCE [LARGE SCALE MRNA] (ISOFORM 2)</scope>
    <source>
        <strain evidence="5">Berkeley</strain>
    </source>
</reference>
<reference evidence="4" key="4">
    <citation type="journal article" date="2002" name="Biochem. J.">
        <title>Identification of Drosophila melanogaster yellow-f and yellow-f2 proteins as dopachrome-conversion enzymes.</title>
        <authorList>
            <person name="Han Q."/>
            <person name="Fang J."/>
            <person name="Ding H."/>
            <person name="Johnson J.K."/>
            <person name="Christensen B.M."/>
            <person name="Li J."/>
        </authorList>
    </citation>
    <scope>IDENTIFICATION BY MASS SPECTROMETRY</scope>
    <scope>FUNCTION</scope>
    <scope>CATALYTIC ACTIVITY</scope>
    <scope>BIOPHYSICOCHEMICAL PROPERTIES</scope>
    <scope>PATHWAY</scope>
    <scope>SUBCELLULAR LOCATION</scope>
    <scope>DEVELOPMENTAL STAGE</scope>
</reference>
<name>YELF_DROME</name>
<gene>
    <name evidence="6" type="primary">yellow-f</name>
    <name evidence="6" type="ORF">CG18550</name>
</gene>
<evidence type="ECO:0000255" key="1"/>
<evidence type="ECO:0000255" key="2">
    <source>
        <dbReference type="PROSITE-ProRule" id="PRU00498"/>
    </source>
</evidence>
<evidence type="ECO:0000269" key="3">
    <source>
    </source>
</evidence>
<evidence type="ECO:0000305" key="4"/>
<evidence type="ECO:0000312" key="5">
    <source>
        <dbReference type="EMBL" id="AAO39616.1"/>
    </source>
</evidence>
<evidence type="ECO:0000312" key="6">
    <source>
        <dbReference type="FlyBase" id="FBgn0041710"/>
    </source>
</evidence>
<evidence type="ECO:0000312" key="7">
    <source>
        <dbReference type="Proteomes" id="UP000000803"/>
    </source>
</evidence>
<keyword id="KW-0024">Alternative initiation</keyword>
<keyword id="KW-0325">Glycoprotein</keyword>
<keyword id="KW-0413">Isomerase</keyword>
<keyword id="KW-0470">Melanin biosynthesis</keyword>
<keyword id="KW-1185">Reference proteome</keyword>
<keyword id="KW-0964">Secreted</keyword>
<keyword id="KW-0732">Signal</keyword>
<protein>
    <recommendedName>
        <fullName evidence="4">L-dopachrome tautomerase yellow-f</fullName>
        <ecNumber evidence="3">5.3.3.12</ecNumber>
    </recommendedName>
</protein>
<sequence>MLSLDVLLLCAISGFQLLISADGDPMIEVFKWKQLDFYNRGDGYKDLWNRICIPDSHFYNSRKCLGSSSSGSFIQYNNVPQGVTHFRGRLFVTVPRRQPGIPSTLNYIDLAKDGWSQSPHLRAYPNLAVNQYNASEQNLVSVYRTSVDVCGRLWFVDTGMLEFPNNRQQIRHPSIWVIDLANDRLLKRFEIPQSIVEIGRGLASITIDVGARRCNDAYAYIPDLVNRRLHVYHLRSDRIWSFEHSFFNFDPLSDNLNIGGQTFRWDDGIFSATLGSYKPDGSRDVFFHPMASTNEFVVSNRVLQQEFNAARSDHGDDFHLLGTRGPSTQSTMHKYDPRTGVIFFAEVQKSGVGCWKTSKPFSTENHGSVYSNSSEMIYPSDLTIDEEGYIWVMSNSMPIFVYSKLDVEKYNFRIWRQSTLLAKRGTVCE</sequence>